<evidence type="ECO:0000255" key="1">
    <source>
        <dbReference type="HAMAP-Rule" id="MF_00286"/>
    </source>
</evidence>
<keyword id="KW-0997">Cell inner membrane</keyword>
<keyword id="KW-1003">Cell membrane</keyword>
<keyword id="KW-0143">Chaperone</keyword>
<keyword id="KW-1015">Disulfide bond</keyword>
<keyword id="KW-0249">Electron transport</keyword>
<keyword id="KW-0472">Membrane</keyword>
<keyword id="KW-0560">Oxidoreductase</keyword>
<keyword id="KW-0676">Redox-active center</keyword>
<keyword id="KW-1185">Reference proteome</keyword>
<keyword id="KW-0812">Transmembrane</keyword>
<keyword id="KW-1133">Transmembrane helix</keyword>
<keyword id="KW-0813">Transport</keyword>
<feature type="chain" id="PRO_0000298352" description="Disulfide bond formation protein B">
    <location>
        <begin position="1"/>
        <end position="166"/>
    </location>
</feature>
<feature type="topological domain" description="Cytoplasmic" evidence="1">
    <location>
        <begin position="1"/>
        <end position="10"/>
    </location>
</feature>
<feature type="transmembrane region" description="Helical" evidence="1">
    <location>
        <begin position="11"/>
        <end position="27"/>
    </location>
</feature>
<feature type="topological domain" description="Periplasmic" evidence="1">
    <location>
        <begin position="28"/>
        <end position="45"/>
    </location>
</feature>
<feature type="transmembrane region" description="Helical" evidence="1">
    <location>
        <begin position="46"/>
        <end position="62"/>
    </location>
</feature>
<feature type="topological domain" description="Cytoplasmic" evidence="1">
    <location>
        <begin position="63"/>
        <end position="69"/>
    </location>
</feature>
<feature type="transmembrane region" description="Helical" evidence="1">
    <location>
        <begin position="70"/>
        <end position="86"/>
    </location>
</feature>
<feature type="topological domain" description="Periplasmic" evidence="1">
    <location>
        <begin position="87"/>
        <end position="143"/>
    </location>
</feature>
<feature type="transmembrane region" description="Helical" evidence="1">
    <location>
        <begin position="144"/>
        <end position="162"/>
    </location>
</feature>
<feature type="topological domain" description="Cytoplasmic" evidence="1">
    <location>
        <begin position="163"/>
        <end position="166"/>
    </location>
</feature>
<feature type="disulfide bond" description="Redox-active" evidence="1">
    <location>
        <begin position="37"/>
        <end position="40"/>
    </location>
</feature>
<feature type="disulfide bond" description="Redox-active" evidence="1">
    <location>
        <begin position="102"/>
        <end position="129"/>
    </location>
</feature>
<dbReference type="EMBL" id="AE016825">
    <property type="protein sequence ID" value="AAQ60859.1"/>
    <property type="molecule type" value="Genomic_DNA"/>
</dbReference>
<dbReference type="RefSeq" id="WP_011136740.1">
    <property type="nucleotide sequence ID" value="NC_005085.1"/>
</dbReference>
<dbReference type="SMR" id="Q7NT68"/>
<dbReference type="STRING" id="243365.CV_3193"/>
<dbReference type="GeneID" id="66364415"/>
<dbReference type="KEGG" id="cvi:CV_3193"/>
<dbReference type="eggNOG" id="COG1495">
    <property type="taxonomic scope" value="Bacteria"/>
</dbReference>
<dbReference type="HOGENOM" id="CLU_098660_1_1_4"/>
<dbReference type="OrthoDB" id="3711263at2"/>
<dbReference type="Proteomes" id="UP000001424">
    <property type="component" value="Chromosome"/>
</dbReference>
<dbReference type="GO" id="GO:0005886">
    <property type="term" value="C:plasma membrane"/>
    <property type="evidence" value="ECO:0007669"/>
    <property type="project" value="UniProtKB-SubCell"/>
</dbReference>
<dbReference type="GO" id="GO:0009055">
    <property type="term" value="F:electron transfer activity"/>
    <property type="evidence" value="ECO:0007669"/>
    <property type="project" value="UniProtKB-UniRule"/>
</dbReference>
<dbReference type="GO" id="GO:0015035">
    <property type="term" value="F:protein-disulfide reductase activity"/>
    <property type="evidence" value="ECO:0007669"/>
    <property type="project" value="UniProtKB-UniRule"/>
</dbReference>
<dbReference type="GO" id="GO:0006457">
    <property type="term" value="P:protein folding"/>
    <property type="evidence" value="ECO:0007669"/>
    <property type="project" value="InterPro"/>
</dbReference>
<dbReference type="Gene3D" id="1.20.1550.10">
    <property type="entry name" value="DsbB-like"/>
    <property type="match status" value="1"/>
</dbReference>
<dbReference type="HAMAP" id="MF_00286">
    <property type="entry name" value="DsbB"/>
    <property type="match status" value="1"/>
</dbReference>
<dbReference type="InterPro" id="IPR003752">
    <property type="entry name" value="DiS_bond_form_DsbB/BdbC"/>
</dbReference>
<dbReference type="InterPro" id="IPR022920">
    <property type="entry name" value="Disulphide_bond_form_DsbB"/>
</dbReference>
<dbReference type="InterPro" id="IPR050183">
    <property type="entry name" value="DsbB"/>
</dbReference>
<dbReference type="InterPro" id="IPR023380">
    <property type="entry name" value="DsbB-like_sf"/>
</dbReference>
<dbReference type="PANTHER" id="PTHR36570">
    <property type="entry name" value="DISULFIDE BOND FORMATION PROTEIN B"/>
    <property type="match status" value="1"/>
</dbReference>
<dbReference type="PANTHER" id="PTHR36570:SF3">
    <property type="entry name" value="DISULFIDE BOND FORMATION PROTEIN B"/>
    <property type="match status" value="1"/>
</dbReference>
<dbReference type="Pfam" id="PF02600">
    <property type="entry name" value="DsbB"/>
    <property type="match status" value="1"/>
</dbReference>
<dbReference type="SUPFAM" id="SSF158442">
    <property type="entry name" value="DsbB-like"/>
    <property type="match status" value="1"/>
</dbReference>
<sequence length="166" mass="17673">MGLNITNRQGFLLVAAACAGAIGFALFAQYQLGEEPCPLCILQRIGVMAVGALALLAALHNPGKTGAKVWGGLMTLAALSGAGVSLRQLWLQSLPADQVPQCGPGLEFLMESFPLWEVLSKVLKGSGECAAIQGRFLGMTMPFWVAVFFAGVIVWTLWLVGRRRRG</sequence>
<name>DSBB_CHRVO</name>
<accession>Q7NT68</accession>
<comment type="function">
    <text evidence="1">Required for disulfide bond formation in some periplasmic proteins. Acts by oxidizing the DsbA protein.</text>
</comment>
<comment type="subcellular location">
    <subcellularLocation>
        <location evidence="1">Cell inner membrane</location>
        <topology evidence="1">Multi-pass membrane protein</topology>
    </subcellularLocation>
</comment>
<comment type="similarity">
    <text evidence="1">Belongs to the DsbB family.</text>
</comment>
<organism>
    <name type="scientific">Chromobacterium violaceum (strain ATCC 12472 / DSM 30191 / JCM 1249 / CCUG 213 / NBRC 12614 / NCIMB 9131 / NCTC 9757 / MK)</name>
    <dbReference type="NCBI Taxonomy" id="243365"/>
    <lineage>
        <taxon>Bacteria</taxon>
        <taxon>Pseudomonadati</taxon>
        <taxon>Pseudomonadota</taxon>
        <taxon>Betaproteobacteria</taxon>
        <taxon>Neisseriales</taxon>
        <taxon>Chromobacteriaceae</taxon>
        <taxon>Chromobacterium</taxon>
    </lineage>
</organism>
<proteinExistence type="inferred from homology"/>
<gene>
    <name evidence="1" type="primary">dsbB</name>
    <name type="ordered locus">CV_3193</name>
</gene>
<protein>
    <recommendedName>
        <fullName evidence="1">Disulfide bond formation protein B</fullName>
    </recommendedName>
    <alternativeName>
        <fullName evidence="1">Disulfide oxidoreductase</fullName>
    </alternativeName>
</protein>
<reference key="1">
    <citation type="journal article" date="2003" name="Proc. Natl. Acad. Sci. U.S.A.">
        <title>The complete genome sequence of Chromobacterium violaceum reveals remarkable and exploitable bacterial adaptability.</title>
        <authorList>
            <person name="Vasconcelos A.T.R."/>
            <person name="de Almeida D.F."/>
            <person name="Hungria M."/>
            <person name="Guimaraes C.T."/>
            <person name="Antonio R.V."/>
            <person name="Almeida F.C."/>
            <person name="de Almeida L.G.P."/>
            <person name="de Almeida R."/>
            <person name="Alves-Gomes J.A."/>
            <person name="Andrade E.M."/>
            <person name="Araripe J."/>
            <person name="de Araujo M.F.F."/>
            <person name="Astolfi-Filho S."/>
            <person name="Azevedo V."/>
            <person name="Baptista A.J."/>
            <person name="Bataus L.A.M."/>
            <person name="Batista J.S."/>
            <person name="Belo A."/>
            <person name="van den Berg C."/>
            <person name="Bogo M."/>
            <person name="Bonatto S."/>
            <person name="Bordignon J."/>
            <person name="Brigido M.M."/>
            <person name="Brito C.A."/>
            <person name="Brocchi M."/>
            <person name="Burity H.A."/>
            <person name="Camargo A.A."/>
            <person name="Cardoso D.D.P."/>
            <person name="Carneiro N.P."/>
            <person name="Carraro D.M."/>
            <person name="Carvalho C.M.B."/>
            <person name="Cascardo J.C.M."/>
            <person name="Cavada B.S."/>
            <person name="Chueire L.M.O."/>
            <person name="Creczynski-Pasa T.B."/>
            <person name="Cunha-Junior N.C."/>
            <person name="Fagundes N."/>
            <person name="Falcao C.L."/>
            <person name="Fantinatti F."/>
            <person name="Farias I.P."/>
            <person name="Felipe M.S.S."/>
            <person name="Ferrari L.P."/>
            <person name="Ferro J.A."/>
            <person name="Ferro M.I.T."/>
            <person name="Franco G.R."/>
            <person name="Freitas N.S.A."/>
            <person name="Furlan L.R."/>
            <person name="Gazzinelli R.T."/>
            <person name="Gomes E.A."/>
            <person name="Goncalves P.R."/>
            <person name="Grangeiro T.B."/>
            <person name="Grattapaglia D."/>
            <person name="Grisard E.C."/>
            <person name="Hanna E.S."/>
            <person name="Jardim S.N."/>
            <person name="Laurino J."/>
            <person name="Leoi L.C.T."/>
            <person name="Lima L.F.A."/>
            <person name="Loureiro M.F."/>
            <person name="Lyra M.C.C.P."/>
            <person name="Madeira H.M.F."/>
            <person name="Manfio G.P."/>
            <person name="Maranhao A.Q."/>
            <person name="Martins W.S."/>
            <person name="di Mauro S.M.Z."/>
            <person name="de Medeiros S.R.B."/>
            <person name="Meissner R.V."/>
            <person name="Moreira M.A.M."/>
            <person name="Nascimento F.F."/>
            <person name="Nicolas M.F."/>
            <person name="Oliveira J.G."/>
            <person name="Oliveira S.C."/>
            <person name="Paixao R.F.C."/>
            <person name="Parente J.A."/>
            <person name="Pedrosa F.O."/>
            <person name="Pena S.D.J."/>
            <person name="Pereira J.O."/>
            <person name="Pereira M."/>
            <person name="Pinto L.S.R.C."/>
            <person name="Pinto L.S."/>
            <person name="Porto J.I.R."/>
            <person name="Potrich D.P."/>
            <person name="Ramalho-Neto C.E."/>
            <person name="Reis A.M.M."/>
            <person name="Rigo L.U."/>
            <person name="Rondinelli E."/>
            <person name="Santos E.B.P."/>
            <person name="Santos F.R."/>
            <person name="Schneider M.P.C."/>
            <person name="Seuanez H.N."/>
            <person name="Silva A.M.R."/>
            <person name="da Silva A.L.C."/>
            <person name="Silva D.W."/>
            <person name="Silva R."/>
            <person name="Simoes I.C."/>
            <person name="Simon D."/>
            <person name="Soares C.M.A."/>
            <person name="Soares R.B.A."/>
            <person name="Souza E.M."/>
            <person name="Souza K.R.L."/>
            <person name="Souza R.C."/>
            <person name="Steffens M.B.R."/>
            <person name="Steindel M."/>
            <person name="Teixeira S.R."/>
            <person name="Urmenyi T."/>
            <person name="Vettore A."/>
            <person name="Wassem R."/>
            <person name="Zaha A."/>
            <person name="Simpson A.J.G."/>
        </authorList>
    </citation>
    <scope>NUCLEOTIDE SEQUENCE [LARGE SCALE GENOMIC DNA]</scope>
    <source>
        <strain>ATCC 12472 / DSM 30191 / JCM 1249 / CCUG 213 / NBRC 12614 / NCIMB 9131 / NCTC 9757 / MK</strain>
    </source>
</reference>